<name>NTPPB_PHOPR</name>
<sequence length="193" mass="21413">MTQPLLLASTSPFRKVLLDKFQYPFETANPNTDESSFSGESAEALVQRLAEQKAKACGNNYPEHLIIGSDQVCVINGKIIGKPHTVENACLQLKAASGQIVTFYTGLCLYNAKTGQSDVICEPFHVHFRQLTEQEIERYIEREMPLYCAGSFMCEGLGIALFNKLEGRDPNTLIGLPLIALREMLEKQGISIL</sequence>
<accession>Q6LSX6</accession>
<organism>
    <name type="scientific">Photobacterium profundum (strain SS9)</name>
    <dbReference type="NCBI Taxonomy" id="298386"/>
    <lineage>
        <taxon>Bacteria</taxon>
        <taxon>Pseudomonadati</taxon>
        <taxon>Pseudomonadota</taxon>
        <taxon>Gammaproteobacteria</taxon>
        <taxon>Vibrionales</taxon>
        <taxon>Vibrionaceae</taxon>
        <taxon>Photobacterium</taxon>
    </lineage>
</organism>
<gene>
    <name type="ordered locus">PBPRA1189</name>
</gene>
<evidence type="ECO:0000255" key="1">
    <source>
        <dbReference type="HAMAP-Rule" id="MF_00528"/>
    </source>
</evidence>
<evidence type="ECO:0000305" key="2"/>
<reference key="1">
    <citation type="journal article" date="2005" name="Science">
        <title>Life at depth: Photobacterium profundum genome sequence and expression analysis.</title>
        <authorList>
            <person name="Vezzi A."/>
            <person name="Campanaro S."/>
            <person name="D'Angelo M."/>
            <person name="Simonato F."/>
            <person name="Vitulo N."/>
            <person name="Lauro F.M."/>
            <person name="Cestaro A."/>
            <person name="Malacrida G."/>
            <person name="Simionati B."/>
            <person name="Cannata N."/>
            <person name="Romualdi C."/>
            <person name="Bartlett D.H."/>
            <person name="Valle G."/>
        </authorList>
    </citation>
    <scope>NUCLEOTIDE SEQUENCE [LARGE SCALE GENOMIC DNA]</scope>
    <source>
        <strain>ATCC BAA-1253 / SS9</strain>
    </source>
</reference>
<dbReference type="EC" id="3.6.1.-" evidence="1"/>
<dbReference type="EMBL" id="CR378666">
    <property type="protein sequence ID" value="CAG19600.1"/>
    <property type="status" value="ALT_INIT"/>
    <property type="molecule type" value="Genomic_DNA"/>
</dbReference>
<dbReference type="RefSeq" id="WP_041393983.1">
    <property type="nucleotide sequence ID" value="NC_006370.1"/>
</dbReference>
<dbReference type="SMR" id="Q6LSX6"/>
<dbReference type="STRING" id="298386.PBPRA1189"/>
<dbReference type="KEGG" id="ppr:PBPRA1189"/>
<dbReference type="eggNOG" id="COG0424">
    <property type="taxonomic scope" value="Bacteria"/>
</dbReference>
<dbReference type="HOGENOM" id="CLU_040416_1_0_6"/>
<dbReference type="Proteomes" id="UP000000593">
    <property type="component" value="Chromosome 1"/>
</dbReference>
<dbReference type="GO" id="GO:0005737">
    <property type="term" value="C:cytoplasm"/>
    <property type="evidence" value="ECO:0007669"/>
    <property type="project" value="UniProtKB-SubCell"/>
</dbReference>
<dbReference type="GO" id="GO:0047429">
    <property type="term" value="F:nucleoside triphosphate diphosphatase activity"/>
    <property type="evidence" value="ECO:0007669"/>
    <property type="project" value="InterPro"/>
</dbReference>
<dbReference type="GO" id="GO:0009117">
    <property type="term" value="P:nucleotide metabolic process"/>
    <property type="evidence" value="ECO:0007669"/>
    <property type="project" value="UniProtKB-KW"/>
</dbReference>
<dbReference type="CDD" id="cd00555">
    <property type="entry name" value="Maf"/>
    <property type="match status" value="1"/>
</dbReference>
<dbReference type="FunFam" id="3.90.950.10:FF:000005">
    <property type="entry name" value="7-methyl-GTP pyrophosphatase"/>
    <property type="match status" value="1"/>
</dbReference>
<dbReference type="Gene3D" id="3.90.950.10">
    <property type="match status" value="1"/>
</dbReference>
<dbReference type="HAMAP" id="MF_00528">
    <property type="entry name" value="Maf"/>
    <property type="match status" value="1"/>
</dbReference>
<dbReference type="InterPro" id="IPR029001">
    <property type="entry name" value="ITPase-like_fam"/>
</dbReference>
<dbReference type="InterPro" id="IPR003697">
    <property type="entry name" value="Maf-like"/>
</dbReference>
<dbReference type="NCBIfam" id="TIGR00172">
    <property type="entry name" value="maf"/>
    <property type="match status" value="1"/>
</dbReference>
<dbReference type="PANTHER" id="PTHR43213:SF10">
    <property type="entry name" value="7-METHYL-GTP PYROPHOSPHATASE"/>
    <property type="match status" value="1"/>
</dbReference>
<dbReference type="PANTHER" id="PTHR43213">
    <property type="entry name" value="BIFUNCTIONAL DTTP/UTP PYROPHOSPHATASE/METHYLTRANSFERASE PROTEIN-RELATED"/>
    <property type="match status" value="1"/>
</dbReference>
<dbReference type="Pfam" id="PF02545">
    <property type="entry name" value="Maf"/>
    <property type="match status" value="1"/>
</dbReference>
<dbReference type="PIRSF" id="PIRSF006305">
    <property type="entry name" value="Maf"/>
    <property type="match status" value="1"/>
</dbReference>
<dbReference type="SUPFAM" id="SSF52972">
    <property type="entry name" value="ITPase-like"/>
    <property type="match status" value="1"/>
</dbReference>
<proteinExistence type="inferred from homology"/>
<keyword id="KW-0963">Cytoplasm</keyword>
<keyword id="KW-0378">Hydrolase</keyword>
<keyword id="KW-0546">Nucleotide metabolism</keyword>
<keyword id="KW-1185">Reference proteome</keyword>
<protein>
    <recommendedName>
        <fullName evidence="1">7-methyl-GTP pyrophosphatase</fullName>
        <shortName evidence="1">m(7)GTP pyrophosphatase</shortName>
        <ecNumber evidence="1">3.6.1.-</ecNumber>
    </recommendedName>
</protein>
<feature type="chain" id="PRO_0000267366" description="7-methyl-GTP pyrophosphatase">
    <location>
        <begin position="1"/>
        <end position="193"/>
    </location>
</feature>
<feature type="active site" description="Proton acceptor" evidence="1">
    <location>
        <position position="70"/>
    </location>
</feature>
<feature type="site" description="Important for substrate specificity" evidence="1">
    <location>
        <position position="13"/>
    </location>
</feature>
<feature type="site" description="Important for substrate specificity" evidence="1">
    <location>
        <position position="71"/>
    </location>
</feature>
<feature type="site" description="Important for substrate specificity" evidence="1">
    <location>
        <position position="155"/>
    </location>
</feature>
<comment type="function">
    <text evidence="1">Nucleoside triphosphate pyrophosphatase that hydrolyzes 7-methyl-GTP (m(7)GTP). May have a dual role in cell division arrest and in preventing the incorporation of modified nucleotides into cellular nucleic acids.</text>
</comment>
<comment type="catalytic activity">
    <reaction evidence="1">
        <text>N(7)-methyl-GTP + H2O = N(7)-methyl-GMP + diphosphate + H(+)</text>
        <dbReference type="Rhea" id="RHEA:58744"/>
        <dbReference type="ChEBI" id="CHEBI:15377"/>
        <dbReference type="ChEBI" id="CHEBI:15378"/>
        <dbReference type="ChEBI" id="CHEBI:33019"/>
        <dbReference type="ChEBI" id="CHEBI:58285"/>
        <dbReference type="ChEBI" id="CHEBI:87133"/>
    </reaction>
</comment>
<comment type="cofactor">
    <cofactor evidence="1">
        <name>a divalent metal cation</name>
        <dbReference type="ChEBI" id="CHEBI:60240"/>
    </cofactor>
</comment>
<comment type="subcellular location">
    <subcellularLocation>
        <location evidence="1">Cytoplasm</location>
    </subcellularLocation>
</comment>
<comment type="similarity">
    <text evidence="1">Belongs to the Maf family. YceF subfamily.</text>
</comment>
<comment type="sequence caution" evidence="2">
    <conflict type="erroneous initiation">
        <sequence resource="EMBL-CDS" id="CAG19600"/>
    </conflict>
</comment>